<proteinExistence type="evidence at protein level"/>
<evidence type="ECO:0000250" key="1">
    <source>
        <dbReference type="UniProtKB" id="P0DI80"/>
    </source>
</evidence>
<evidence type="ECO:0000255" key="2"/>
<evidence type="ECO:0000269" key="3">
    <source>
    </source>
</evidence>
<evidence type="ECO:0000269" key="4">
    <source>
    </source>
</evidence>
<evidence type="ECO:0000303" key="5">
    <source>
    </source>
</evidence>
<evidence type="ECO:0000305" key="6"/>
<evidence type="ECO:0000312" key="7">
    <source>
        <dbReference type="EMBL" id="BAE33867.1"/>
    </source>
</evidence>
<evidence type="ECO:0000312" key="8">
    <source>
        <dbReference type="MGI" id="MGI:1915778"/>
    </source>
</evidence>
<evidence type="ECO:0000312" key="9">
    <source>
        <dbReference type="Proteomes" id="UP000000589"/>
    </source>
</evidence>
<dbReference type="EMBL" id="AK156823">
    <property type="protein sequence ID" value="BAE33867.1"/>
    <property type="molecule type" value="mRNA"/>
</dbReference>
<dbReference type="CCDS" id="CCDS56821.1"/>
<dbReference type="RefSeq" id="NP_001156470.1">
    <property type="nucleotide sequence ID" value="NM_001162998.1"/>
</dbReference>
<dbReference type="SMR" id="Q3U0I6"/>
<dbReference type="FunCoup" id="Q3U0I6">
    <property type="interactions" value="242"/>
</dbReference>
<dbReference type="STRING" id="10090.ENSMUSP00000133699"/>
<dbReference type="PaxDb" id="10090-ENSMUSP00000133699"/>
<dbReference type="Ensembl" id="ENSMUST00000132961.2">
    <property type="protein sequence ID" value="ENSMUSP00000133699.2"/>
    <property type="gene ID" value="ENSMUSG00000075420.7"/>
</dbReference>
<dbReference type="GeneID" id="68528"/>
<dbReference type="KEGG" id="mmu:68528"/>
<dbReference type="UCSC" id="uc011yhr.1">
    <property type="organism name" value="mouse"/>
</dbReference>
<dbReference type="AGR" id="MGI:1915778"/>
<dbReference type="CTD" id="100130933"/>
<dbReference type="MGI" id="MGI:1915778">
    <property type="gene designation" value="Smim6"/>
</dbReference>
<dbReference type="VEuPathDB" id="HostDB:ENSMUSG00000075420"/>
<dbReference type="eggNOG" id="ENOG502RWMW">
    <property type="taxonomic scope" value="Eukaryota"/>
</dbReference>
<dbReference type="GeneTree" id="ENSGT00940000167442"/>
<dbReference type="HOGENOM" id="CLU_210527_0_0_1"/>
<dbReference type="BioGRID-ORCS" id="68528">
    <property type="hits" value="5 hits in 72 CRISPR screens"/>
</dbReference>
<dbReference type="ChiTaRS" id="Smim6">
    <property type="organism name" value="mouse"/>
</dbReference>
<dbReference type="Proteomes" id="UP000000589">
    <property type="component" value="Chromosome 11"/>
</dbReference>
<dbReference type="Bgee" id="ENSMUSG00000075420">
    <property type="expression patterns" value="Expressed in epithelium of stomach and 68 other cell types or tissues"/>
</dbReference>
<dbReference type="GO" id="GO:0005789">
    <property type="term" value="C:endoplasmic reticulum membrane"/>
    <property type="evidence" value="ECO:0000314"/>
    <property type="project" value="MGI"/>
</dbReference>
<gene>
    <name type="primary">Erln</name>
    <name evidence="8" type="synonym">Smim6</name>
</gene>
<reference evidence="7" key="1">
    <citation type="journal article" date="2005" name="Science">
        <title>The transcriptional landscape of the mammalian genome.</title>
        <authorList>
            <person name="Carninci P."/>
            <person name="Kasukawa T."/>
            <person name="Katayama S."/>
            <person name="Gough J."/>
            <person name="Frith M.C."/>
            <person name="Maeda N."/>
            <person name="Oyama R."/>
            <person name="Ravasi T."/>
            <person name="Lenhard B."/>
            <person name="Wells C."/>
            <person name="Kodzius R."/>
            <person name="Shimokawa K."/>
            <person name="Bajic V.B."/>
            <person name="Brenner S.E."/>
            <person name="Batalov S."/>
            <person name="Forrest A.R."/>
            <person name="Zavolan M."/>
            <person name="Davis M.J."/>
            <person name="Wilming L.G."/>
            <person name="Aidinis V."/>
            <person name="Allen J.E."/>
            <person name="Ambesi-Impiombato A."/>
            <person name="Apweiler R."/>
            <person name="Aturaliya R.N."/>
            <person name="Bailey T.L."/>
            <person name="Bansal M."/>
            <person name="Baxter L."/>
            <person name="Beisel K.W."/>
            <person name="Bersano T."/>
            <person name="Bono H."/>
            <person name="Chalk A.M."/>
            <person name="Chiu K.P."/>
            <person name="Choudhary V."/>
            <person name="Christoffels A."/>
            <person name="Clutterbuck D.R."/>
            <person name="Crowe M.L."/>
            <person name="Dalla E."/>
            <person name="Dalrymple B.P."/>
            <person name="de Bono B."/>
            <person name="Della Gatta G."/>
            <person name="di Bernardo D."/>
            <person name="Down T."/>
            <person name="Engstrom P."/>
            <person name="Fagiolini M."/>
            <person name="Faulkner G."/>
            <person name="Fletcher C.F."/>
            <person name="Fukushima T."/>
            <person name="Furuno M."/>
            <person name="Futaki S."/>
            <person name="Gariboldi M."/>
            <person name="Georgii-Hemming P."/>
            <person name="Gingeras T.R."/>
            <person name="Gojobori T."/>
            <person name="Green R.E."/>
            <person name="Gustincich S."/>
            <person name="Harbers M."/>
            <person name="Hayashi Y."/>
            <person name="Hensch T.K."/>
            <person name="Hirokawa N."/>
            <person name="Hill D."/>
            <person name="Huminiecki L."/>
            <person name="Iacono M."/>
            <person name="Ikeo K."/>
            <person name="Iwama A."/>
            <person name="Ishikawa T."/>
            <person name="Jakt M."/>
            <person name="Kanapin A."/>
            <person name="Katoh M."/>
            <person name="Kawasawa Y."/>
            <person name="Kelso J."/>
            <person name="Kitamura H."/>
            <person name="Kitano H."/>
            <person name="Kollias G."/>
            <person name="Krishnan S.P."/>
            <person name="Kruger A."/>
            <person name="Kummerfeld S.K."/>
            <person name="Kurochkin I.V."/>
            <person name="Lareau L.F."/>
            <person name="Lazarevic D."/>
            <person name="Lipovich L."/>
            <person name="Liu J."/>
            <person name="Liuni S."/>
            <person name="McWilliam S."/>
            <person name="Madan Babu M."/>
            <person name="Madera M."/>
            <person name="Marchionni L."/>
            <person name="Matsuda H."/>
            <person name="Matsuzawa S."/>
            <person name="Miki H."/>
            <person name="Mignone F."/>
            <person name="Miyake S."/>
            <person name="Morris K."/>
            <person name="Mottagui-Tabar S."/>
            <person name="Mulder N."/>
            <person name="Nakano N."/>
            <person name="Nakauchi H."/>
            <person name="Ng P."/>
            <person name="Nilsson R."/>
            <person name="Nishiguchi S."/>
            <person name="Nishikawa S."/>
            <person name="Nori F."/>
            <person name="Ohara O."/>
            <person name="Okazaki Y."/>
            <person name="Orlando V."/>
            <person name="Pang K.C."/>
            <person name="Pavan W.J."/>
            <person name="Pavesi G."/>
            <person name="Pesole G."/>
            <person name="Petrovsky N."/>
            <person name="Piazza S."/>
            <person name="Reed J."/>
            <person name="Reid J.F."/>
            <person name="Ring B.Z."/>
            <person name="Ringwald M."/>
            <person name="Rost B."/>
            <person name="Ruan Y."/>
            <person name="Salzberg S.L."/>
            <person name="Sandelin A."/>
            <person name="Schneider C."/>
            <person name="Schoenbach C."/>
            <person name="Sekiguchi K."/>
            <person name="Semple C.A."/>
            <person name="Seno S."/>
            <person name="Sessa L."/>
            <person name="Sheng Y."/>
            <person name="Shibata Y."/>
            <person name="Shimada H."/>
            <person name="Shimada K."/>
            <person name="Silva D."/>
            <person name="Sinclair B."/>
            <person name="Sperling S."/>
            <person name="Stupka E."/>
            <person name="Sugiura K."/>
            <person name="Sultana R."/>
            <person name="Takenaka Y."/>
            <person name="Taki K."/>
            <person name="Tammoja K."/>
            <person name="Tan S.L."/>
            <person name="Tang S."/>
            <person name="Taylor M.S."/>
            <person name="Tegner J."/>
            <person name="Teichmann S.A."/>
            <person name="Ueda H.R."/>
            <person name="van Nimwegen E."/>
            <person name="Verardo R."/>
            <person name="Wei C.L."/>
            <person name="Yagi K."/>
            <person name="Yamanishi H."/>
            <person name="Zabarovsky E."/>
            <person name="Zhu S."/>
            <person name="Zimmer A."/>
            <person name="Hide W."/>
            <person name="Bult C."/>
            <person name="Grimmond S.M."/>
            <person name="Teasdale R.D."/>
            <person name="Liu E.T."/>
            <person name="Brusic V."/>
            <person name="Quackenbush J."/>
            <person name="Wahlestedt C."/>
            <person name="Mattick J.S."/>
            <person name="Hume D.A."/>
            <person name="Kai C."/>
            <person name="Sasaki D."/>
            <person name="Tomaru Y."/>
            <person name="Fukuda S."/>
            <person name="Kanamori-Katayama M."/>
            <person name="Suzuki M."/>
            <person name="Aoki J."/>
            <person name="Arakawa T."/>
            <person name="Iida J."/>
            <person name="Imamura K."/>
            <person name="Itoh M."/>
            <person name="Kato T."/>
            <person name="Kawaji H."/>
            <person name="Kawagashira N."/>
            <person name="Kawashima T."/>
            <person name="Kojima M."/>
            <person name="Kondo S."/>
            <person name="Konno H."/>
            <person name="Nakano K."/>
            <person name="Ninomiya N."/>
            <person name="Nishio T."/>
            <person name="Okada M."/>
            <person name="Plessy C."/>
            <person name="Shibata K."/>
            <person name="Shiraki T."/>
            <person name="Suzuki S."/>
            <person name="Tagami M."/>
            <person name="Waki K."/>
            <person name="Watahiki A."/>
            <person name="Okamura-Oho Y."/>
            <person name="Suzuki H."/>
            <person name="Kawai J."/>
            <person name="Hayashizaki Y."/>
        </authorList>
    </citation>
    <scope>NUCLEOTIDE SEQUENCE [LARGE SCALE MRNA]</scope>
    <source>
        <strain evidence="7">NOD</strain>
        <tissue evidence="7">Spleen</tissue>
    </source>
</reference>
<reference evidence="9" key="2">
    <citation type="journal article" date="2009" name="PLoS Biol.">
        <title>Lineage-specific biology revealed by a finished genome assembly of the mouse.</title>
        <authorList>
            <person name="Church D.M."/>
            <person name="Goodstadt L."/>
            <person name="Hillier L.W."/>
            <person name="Zody M.C."/>
            <person name="Goldstein S."/>
            <person name="She X."/>
            <person name="Bult C.J."/>
            <person name="Agarwala R."/>
            <person name="Cherry J.L."/>
            <person name="DiCuccio M."/>
            <person name="Hlavina W."/>
            <person name="Kapustin Y."/>
            <person name="Meric P."/>
            <person name="Maglott D."/>
            <person name="Birtle Z."/>
            <person name="Marques A.C."/>
            <person name="Graves T."/>
            <person name="Zhou S."/>
            <person name="Teague B."/>
            <person name="Potamousis K."/>
            <person name="Churas C."/>
            <person name="Place M."/>
            <person name="Herschleb J."/>
            <person name="Runnheim R."/>
            <person name="Forrest D."/>
            <person name="Amos-Landgraf J."/>
            <person name="Schwartz D.C."/>
            <person name="Cheng Z."/>
            <person name="Lindblad-Toh K."/>
            <person name="Eichler E.E."/>
            <person name="Ponting C.P."/>
        </authorList>
    </citation>
    <scope>NUCLEOTIDE SEQUENCE [LARGE SCALE GENOMIC DNA]</scope>
    <source>
        <strain evidence="9">C57BL/6J</strain>
    </source>
</reference>
<reference evidence="6" key="3">
    <citation type="journal article" date="2016" name="Sci. Signal.">
        <title>Widespread control of calcium signaling by a family of SERCA-inhibiting micropeptides.</title>
        <authorList>
            <person name="Anderson D.M."/>
            <person name="Makarewich C.A."/>
            <person name="Anderson K.M."/>
            <person name="Shelton J.M."/>
            <person name="Bezprozvannaya S."/>
            <person name="Bassel-Duby R."/>
            <person name="Olson E.N."/>
        </authorList>
    </citation>
    <scope>FUNCTION</scope>
    <scope>INTERACTION WITH ATP2A2</scope>
    <scope>SUBCELLULAR LOCATION</scope>
    <scope>TISSUE SPECIFICITY</scope>
</reference>
<reference key="4">
    <citation type="journal article" date="2019" name="J. Mol. Biol.">
        <title>Newly Discovered Micropeptide Regulators of SERCA Form Oligomers but Bind to the Pump as Monomers.</title>
        <authorList>
            <person name="Singh D.R."/>
            <person name="Dalton M.P."/>
            <person name="Cho E.E."/>
            <person name="Pribadi M.P."/>
            <person name="Zak T.J."/>
            <person name="Seflova J."/>
            <person name="Makarewich C.A."/>
            <person name="Olson E.N."/>
            <person name="Robia S.L."/>
        </authorList>
    </citation>
    <scope>FUNCTION</scope>
    <scope>SUBUNIT</scope>
    <scope>INTERACTION WITH ATP2A2</scope>
</reference>
<accession>Q3U0I6</accession>
<feature type="chain" id="PRO_0000461427" description="Endoregulin">
    <location>
        <begin position="1"/>
        <end position="56"/>
    </location>
</feature>
<feature type="transmembrane region" description="Helical" evidence="2">
    <location>
        <begin position="25"/>
        <end position="45"/>
    </location>
</feature>
<comment type="function">
    <text evidence="3 4">Inhibits the activity of the calcium ATPases ATP2A2/SERCA2 and ATP2A3/SERCA3 by decreasing their apparent affinity for Ca(2+).</text>
</comment>
<comment type="subunit">
    <text evidence="1 3 4">Homooligomer (PubMed:31449798). Can also form heterooligomers with other sarcoplasmic/endoplasmic reticulum calcium ATPase (SERCA) regulators ARLN, PLN, SLN and STRIT1/DWORF (By similarity). Monomer (PubMed:31449798). Interacts as a monomer with ATP2A2/SERCA2; the interaction results in inhibition of ATP2A2 Ca(2+) affinity (PubMed:27923914, PubMed:31449798).</text>
</comment>
<comment type="subcellular location">
    <subcellularLocation>
        <location evidence="3">Endoplasmic reticulum membrane</location>
        <topology evidence="2">Single-pass membrane protein</topology>
    </subcellularLocation>
</comment>
<comment type="tissue specificity">
    <text evidence="3">Largely expressed in non-muscle tissues with the exception of weak expression in body wall muscles at 14.5 dpc (PubMed:27923914). Expressed in epithelial cells of the trachea, bronchus, lung, intestine, pancreas, and liver (PubMed:27923914).</text>
</comment>
<keyword id="KW-0256">Endoplasmic reticulum</keyword>
<keyword id="KW-0472">Membrane</keyword>
<keyword id="KW-1185">Reference proteome</keyword>
<keyword id="KW-0812">Transmembrane</keyword>
<keyword id="KW-1133">Transmembrane helix</keyword>
<sequence length="56" mass="6400">MGQMVPPRSIQNEDFWKNPWDVGGLTVIGLFTSTFLLFVLFAVVFGYVEKAVFEEE</sequence>
<protein>
    <recommendedName>
        <fullName evidence="5">Endoregulin</fullName>
        <shortName evidence="5">ELN</shortName>
    </recommendedName>
    <alternativeName>
        <fullName evidence="8">Small integral membrane protein 6</fullName>
    </alternativeName>
</protein>
<name>ERLN_MOUSE</name>
<organism evidence="7">
    <name type="scientific">Mus musculus</name>
    <name type="common">Mouse</name>
    <dbReference type="NCBI Taxonomy" id="10090"/>
    <lineage>
        <taxon>Eukaryota</taxon>
        <taxon>Metazoa</taxon>
        <taxon>Chordata</taxon>
        <taxon>Craniata</taxon>
        <taxon>Vertebrata</taxon>
        <taxon>Euteleostomi</taxon>
        <taxon>Mammalia</taxon>
        <taxon>Eutheria</taxon>
        <taxon>Euarchontoglires</taxon>
        <taxon>Glires</taxon>
        <taxon>Rodentia</taxon>
        <taxon>Myomorpha</taxon>
        <taxon>Muroidea</taxon>
        <taxon>Muridae</taxon>
        <taxon>Murinae</taxon>
        <taxon>Mus</taxon>
        <taxon>Mus</taxon>
    </lineage>
</organism>